<protein>
    <recommendedName>
        <fullName>F-box only protein 30</fullName>
    </recommendedName>
</protein>
<comment type="function">
    <text evidence="1">Substrate-recognition component of the SCF (SKP1-CUL1-F-box protein)-type E3 ubiquitin ligase complex. Required for muscle atrophy following denervation.</text>
</comment>
<comment type="pathway">
    <text>Protein modification; protein ubiquitination.</text>
</comment>
<comment type="subunit">
    <text evidence="1">Part of a SCF (SKP1-cullin-F-box) protein ligase complex. Interacts with SKP1, CUL1 and RBX1/ROC1 (By similarity).</text>
</comment>
<comment type="interaction">
    <interactant intactId="EBI-2556210">
        <id>Q8TB52</id>
    </interactant>
    <interactant intactId="EBI-350606">
        <id>Q9UM54</id>
        <label>MYO6</label>
    </interactant>
    <organismsDiffer>false</organismsDiffer>
    <experiments>2</experiments>
</comment>
<comment type="PTM">
    <text evidence="1">Auto-ubiquitinated.</text>
</comment>
<comment type="PTM">
    <text evidence="1">May be neddylated. Neddylation may be required for E3 ligase activity (By similarity).</text>
</comment>
<comment type="sequence caution" evidence="7">
    <conflict type="erroneous initiation">
        <sequence resource="EMBL-CDS" id="AAK30299"/>
    </conflict>
</comment>
<comment type="sequence caution" evidence="7">
    <conflict type="miscellaneous discrepancy">
        <sequence resource="EMBL-CDS" id="AAK30299"/>
    </conflict>
    <text>Contaminating sequence. Sequence of unknown origin in the N-terminal part.</text>
</comment>
<dbReference type="EMBL" id="AL356599">
    <property type="status" value="NOT_ANNOTATED_CDS"/>
    <property type="molecule type" value="Genomic_DNA"/>
</dbReference>
<dbReference type="EMBL" id="BC024326">
    <property type="protein sequence ID" value="AAH24326.3"/>
    <property type="molecule type" value="mRNA"/>
</dbReference>
<dbReference type="EMBL" id="AF248640">
    <property type="protein sequence ID" value="AAK30299.1"/>
    <property type="status" value="ALT_INIT"/>
    <property type="molecule type" value="mRNA"/>
</dbReference>
<dbReference type="CCDS" id="CCDS5208.1"/>
<dbReference type="RefSeq" id="NP_001335021.1">
    <property type="nucleotide sequence ID" value="NM_001348092.2"/>
</dbReference>
<dbReference type="RefSeq" id="NP_115521.3">
    <property type="nucleotide sequence ID" value="NM_032145.4"/>
</dbReference>
<dbReference type="RefSeq" id="XP_011534479.1">
    <property type="nucleotide sequence ID" value="XM_011536177.2"/>
</dbReference>
<dbReference type="RefSeq" id="XP_016866842.1">
    <property type="nucleotide sequence ID" value="XM_017011353.1"/>
</dbReference>
<dbReference type="PDB" id="2YRE">
    <property type="method" value="NMR"/>
    <property type="chains" value="A=1-87"/>
</dbReference>
<dbReference type="PDBsum" id="2YRE"/>
<dbReference type="SMR" id="Q8TB52"/>
<dbReference type="BioGRID" id="123879">
    <property type="interactions" value="57"/>
</dbReference>
<dbReference type="ComplexPortal" id="CPX-7968">
    <property type="entry name" value="SCF E3 ubiquitin ligase complex, FBXO30 variant"/>
</dbReference>
<dbReference type="FunCoup" id="Q8TB52">
    <property type="interactions" value="1499"/>
</dbReference>
<dbReference type="IntAct" id="Q8TB52">
    <property type="interactions" value="36"/>
</dbReference>
<dbReference type="MINT" id="Q8TB52"/>
<dbReference type="STRING" id="9606.ENSP00000237281"/>
<dbReference type="GlyGen" id="Q8TB52">
    <property type="glycosylation" value="2 sites, 1 N-linked glycan (1 site), 1 O-linked glycan (1 site)"/>
</dbReference>
<dbReference type="iPTMnet" id="Q8TB52"/>
<dbReference type="PhosphoSitePlus" id="Q8TB52"/>
<dbReference type="BioMuta" id="FBXO30"/>
<dbReference type="DMDM" id="51704325"/>
<dbReference type="jPOST" id="Q8TB52"/>
<dbReference type="MassIVE" id="Q8TB52"/>
<dbReference type="PaxDb" id="9606-ENSP00000237281"/>
<dbReference type="PeptideAtlas" id="Q8TB52"/>
<dbReference type="ProteomicsDB" id="73962"/>
<dbReference type="Pumba" id="Q8TB52"/>
<dbReference type="Antibodypedia" id="33222">
    <property type="antibodies" value="51 antibodies from 13 providers"/>
</dbReference>
<dbReference type="DNASU" id="84085"/>
<dbReference type="Ensembl" id="ENST00000237281.5">
    <property type="protein sequence ID" value="ENSP00000237281.3"/>
    <property type="gene ID" value="ENSG00000118496.5"/>
</dbReference>
<dbReference type="GeneID" id="84085"/>
<dbReference type="KEGG" id="hsa:84085"/>
<dbReference type="MANE-Select" id="ENST00000237281.5">
    <property type="protein sequence ID" value="ENSP00000237281.3"/>
    <property type="RefSeq nucleotide sequence ID" value="NM_032145.5"/>
    <property type="RefSeq protein sequence ID" value="NP_115521.3"/>
</dbReference>
<dbReference type="UCSC" id="uc003qla.4">
    <property type="organism name" value="human"/>
</dbReference>
<dbReference type="AGR" id="HGNC:15600"/>
<dbReference type="CTD" id="84085"/>
<dbReference type="DisGeNET" id="84085"/>
<dbReference type="GeneCards" id="FBXO30"/>
<dbReference type="HGNC" id="HGNC:15600">
    <property type="gene designation" value="FBXO30"/>
</dbReference>
<dbReference type="HPA" id="ENSG00000118496">
    <property type="expression patterns" value="Low tissue specificity"/>
</dbReference>
<dbReference type="MIM" id="609101">
    <property type="type" value="gene"/>
</dbReference>
<dbReference type="neXtProt" id="NX_Q8TB52"/>
<dbReference type="OpenTargets" id="ENSG00000118496"/>
<dbReference type="PharmGKB" id="PA28041"/>
<dbReference type="VEuPathDB" id="HostDB:ENSG00000118496"/>
<dbReference type="eggNOG" id="ENOG502QTD9">
    <property type="taxonomic scope" value="Eukaryota"/>
</dbReference>
<dbReference type="GeneTree" id="ENSGT00950000183204"/>
<dbReference type="HOGENOM" id="CLU_013357_0_0_1"/>
<dbReference type="InParanoid" id="Q8TB52"/>
<dbReference type="OMA" id="SSWQVKE"/>
<dbReference type="OrthoDB" id="5918172at2759"/>
<dbReference type="PAN-GO" id="Q8TB52">
    <property type="GO annotations" value="0 GO annotations based on evolutionary models"/>
</dbReference>
<dbReference type="PhylomeDB" id="Q8TB52"/>
<dbReference type="TreeFam" id="TF343227"/>
<dbReference type="PathwayCommons" id="Q8TB52"/>
<dbReference type="Reactome" id="R-HSA-8951664">
    <property type="pathway name" value="Neddylation"/>
</dbReference>
<dbReference type="Reactome" id="R-HSA-983168">
    <property type="pathway name" value="Antigen processing: Ubiquitination &amp; Proteasome degradation"/>
</dbReference>
<dbReference type="SignaLink" id="Q8TB52"/>
<dbReference type="SIGNOR" id="Q8TB52"/>
<dbReference type="UniPathway" id="UPA00143"/>
<dbReference type="BioGRID-ORCS" id="84085">
    <property type="hits" value="10 hits in 1196 CRISPR screens"/>
</dbReference>
<dbReference type="ChiTaRS" id="FBXO30">
    <property type="organism name" value="human"/>
</dbReference>
<dbReference type="EvolutionaryTrace" id="Q8TB52"/>
<dbReference type="GenomeRNAi" id="84085"/>
<dbReference type="Pharos" id="Q8TB52">
    <property type="development level" value="Tdark"/>
</dbReference>
<dbReference type="PRO" id="PR:Q8TB52"/>
<dbReference type="Proteomes" id="UP000005640">
    <property type="component" value="Chromosome 6"/>
</dbReference>
<dbReference type="RNAct" id="Q8TB52">
    <property type="molecule type" value="protein"/>
</dbReference>
<dbReference type="Bgee" id="ENSG00000118496">
    <property type="expression patterns" value="Expressed in secondary oocyte and 191 other cell types or tissues"/>
</dbReference>
<dbReference type="GO" id="GO:0005829">
    <property type="term" value="C:cytosol"/>
    <property type="evidence" value="ECO:0000304"/>
    <property type="project" value="Reactome"/>
</dbReference>
<dbReference type="GO" id="GO:0061630">
    <property type="term" value="F:ubiquitin protein ligase activity"/>
    <property type="evidence" value="ECO:0007669"/>
    <property type="project" value="InterPro"/>
</dbReference>
<dbReference type="GO" id="GO:0008270">
    <property type="term" value="F:zinc ion binding"/>
    <property type="evidence" value="ECO:0007669"/>
    <property type="project" value="UniProtKB-KW"/>
</dbReference>
<dbReference type="GO" id="GO:0006325">
    <property type="term" value="P:chromatin organization"/>
    <property type="evidence" value="ECO:0007669"/>
    <property type="project" value="Ensembl"/>
</dbReference>
<dbReference type="GO" id="GO:0030261">
    <property type="term" value="P:chromosome condensation"/>
    <property type="evidence" value="ECO:0007669"/>
    <property type="project" value="Ensembl"/>
</dbReference>
<dbReference type="GO" id="GO:0007059">
    <property type="term" value="P:chromosome segregation"/>
    <property type="evidence" value="ECO:0007669"/>
    <property type="project" value="Ensembl"/>
</dbReference>
<dbReference type="GO" id="GO:0010467">
    <property type="term" value="P:gene expression"/>
    <property type="evidence" value="ECO:0007669"/>
    <property type="project" value="Ensembl"/>
</dbReference>
<dbReference type="GO" id="GO:0016567">
    <property type="term" value="P:protein ubiquitination"/>
    <property type="evidence" value="ECO:0007669"/>
    <property type="project" value="UniProtKB-UniPathway"/>
</dbReference>
<dbReference type="CDD" id="cd22174">
    <property type="entry name" value="F-box_FBXO30"/>
    <property type="match status" value="1"/>
</dbReference>
<dbReference type="FunFam" id="3.30.40.150:FF:000001">
    <property type="entry name" value="F-box only protein 30"/>
    <property type="match status" value="1"/>
</dbReference>
<dbReference type="Gene3D" id="1.20.1280.50">
    <property type="match status" value="1"/>
</dbReference>
<dbReference type="Gene3D" id="3.30.40.150">
    <property type="entry name" value="TRAF-like zinc-finger, N-terminal subdomain"/>
    <property type="match status" value="1"/>
</dbReference>
<dbReference type="Gene3D" id="3.30.40.10">
    <property type="entry name" value="Zinc/RING finger domain, C3HC4 (zinc finger)"/>
    <property type="match status" value="1"/>
</dbReference>
<dbReference type="InterPro" id="IPR036047">
    <property type="entry name" value="F-box-like_dom_sf"/>
</dbReference>
<dbReference type="InterPro" id="IPR001810">
    <property type="entry name" value="F-box_dom"/>
</dbReference>
<dbReference type="InterPro" id="IPR031890">
    <property type="entry name" value="Fbxo30/Fbxo40"/>
</dbReference>
<dbReference type="InterPro" id="IPR013083">
    <property type="entry name" value="Znf_RING/FYVE/PHD"/>
</dbReference>
<dbReference type="InterPro" id="IPR001293">
    <property type="entry name" value="Znf_TRAF"/>
</dbReference>
<dbReference type="InterPro" id="IPR043013">
    <property type="entry name" value="Znf_TRAF_N"/>
</dbReference>
<dbReference type="PANTHER" id="PTHR15933:SF13">
    <property type="entry name" value="F-BOX ONLY PROTEIN 30"/>
    <property type="match status" value="1"/>
</dbReference>
<dbReference type="PANTHER" id="PTHR15933">
    <property type="entry name" value="PROTEIN CBG16327"/>
    <property type="match status" value="1"/>
</dbReference>
<dbReference type="Pfam" id="PF15966">
    <property type="entry name" value="F-box_4"/>
    <property type="match status" value="1"/>
</dbReference>
<dbReference type="Pfam" id="PF15965">
    <property type="entry name" value="zf-TRAF_2"/>
    <property type="match status" value="1"/>
</dbReference>
<dbReference type="SUPFAM" id="SSF81383">
    <property type="entry name" value="F-box domain"/>
    <property type="match status" value="1"/>
</dbReference>
<dbReference type="SUPFAM" id="SSF49599">
    <property type="entry name" value="TRAF domain-like"/>
    <property type="match status" value="1"/>
</dbReference>
<dbReference type="PROSITE" id="PS50181">
    <property type="entry name" value="FBOX"/>
    <property type="match status" value="1"/>
</dbReference>
<dbReference type="PROSITE" id="PS50145">
    <property type="entry name" value="ZF_TRAF"/>
    <property type="match status" value="1"/>
</dbReference>
<gene>
    <name type="primary">FBXO30</name>
    <name type="synonym">FBX30</name>
</gene>
<evidence type="ECO:0000250" key="1"/>
<evidence type="ECO:0000255" key="2">
    <source>
        <dbReference type="PROSITE-ProRule" id="PRU00080"/>
    </source>
</evidence>
<evidence type="ECO:0000255" key="3">
    <source>
        <dbReference type="PROSITE-ProRule" id="PRU00207"/>
    </source>
</evidence>
<evidence type="ECO:0000256" key="4">
    <source>
        <dbReference type="SAM" id="MobiDB-lite"/>
    </source>
</evidence>
<evidence type="ECO:0000269" key="5">
    <source>
    </source>
</evidence>
<evidence type="ECO:0000269" key="6">
    <source ref="3"/>
</evidence>
<evidence type="ECO:0000305" key="7"/>
<evidence type="ECO:0007829" key="8">
    <source>
        <dbReference type="PDB" id="2YRE"/>
    </source>
</evidence>
<reference key="1">
    <citation type="journal article" date="2003" name="Nature">
        <title>The DNA sequence and analysis of human chromosome 6.</title>
        <authorList>
            <person name="Mungall A.J."/>
            <person name="Palmer S.A."/>
            <person name="Sims S.K."/>
            <person name="Edwards C.A."/>
            <person name="Ashurst J.L."/>
            <person name="Wilming L."/>
            <person name="Jones M.C."/>
            <person name="Horton R."/>
            <person name="Hunt S.E."/>
            <person name="Scott C.E."/>
            <person name="Gilbert J.G.R."/>
            <person name="Clamp M.E."/>
            <person name="Bethel G."/>
            <person name="Milne S."/>
            <person name="Ainscough R."/>
            <person name="Almeida J.P."/>
            <person name="Ambrose K.D."/>
            <person name="Andrews T.D."/>
            <person name="Ashwell R.I.S."/>
            <person name="Babbage A.K."/>
            <person name="Bagguley C.L."/>
            <person name="Bailey J."/>
            <person name="Banerjee R."/>
            <person name="Barker D.J."/>
            <person name="Barlow K.F."/>
            <person name="Bates K."/>
            <person name="Beare D.M."/>
            <person name="Beasley H."/>
            <person name="Beasley O."/>
            <person name="Bird C.P."/>
            <person name="Blakey S.E."/>
            <person name="Bray-Allen S."/>
            <person name="Brook J."/>
            <person name="Brown A.J."/>
            <person name="Brown J.Y."/>
            <person name="Burford D.C."/>
            <person name="Burrill W."/>
            <person name="Burton J."/>
            <person name="Carder C."/>
            <person name="Carter N.P."/>
            <person name="Chapman J.C."/>
            <person name="Clark S.Y."/>
            <person name="Clark G."/>
            <person name="Clee C.M."/>
            <person name="Clegg S."/>
            <person name="Cobley V."/>
            <person name="Collier R.E."/>
            <person name="Collins J.E."/>
            <person name="Colman L.K."/>
            <person name="Corby N.R."/>
            <person name="Coville G.J."/>
            <person name="Culley K.M."/>
            <person name="Dhami P."/>
            <person name="Davies J."/>
            <person name="Dunn M."/>
            <person name="Earthrowl M.E."/>
            <person name="Ellington A.E."/>
            <person name="Evans K.A."/>
            <person name="Faulkner L."/>
            <person name="Francis M.D."/>
            <person name="Frankish A."/>
            <person name="Frankland J."/>
            <person name="French L."/>
            <person name="Garner P."/>
            <person name="Garnett J."/>
            <person name="Ghori M.J."/>
            <person name="Gilby L.M."/>
            <person name="Gillson C.J."/>
            <person name="Glithero R.J."/>
            <person name="Grafham D.V."/>
            <person name="Grant M."/>
            <person name="Gribble S."/>
            <person name="Griffiths C."/>
            <person name="Griffiths M.N.D."/>
            <person name="Hall R."/>
            <person name="Halls K.S."/>
            <person name="Hammond S."/>
            <person name="Harley J.L."/>
            <person name="Hart E.A."/>
            <person name="Heath P.D."/>
            <person name="Heathcott R."/>
            <person name="Holmes S.J."/>
            <person name="Howden P.J."/>
            <person name="Howe K.L."/>
            <person name="Howell G.R."/>
            <person name="Huckle E."/>
            <person name="Humphray S.J."/>
            <person name="Humphries M.D."/>
            <person name="Hunt A.R."/>
            <person name="Johnson C.M."/>
            <person name="Joy A.A."/>
            <person name="Kay M."/>
            <person name="Keenan S.J."/>
            <person name="Kimberley A.M."/>
            <person name="King A."/>
            <person name="Laird G.K."/>
            <person name="Langford C."/>
            <person name="Lawlor S."/>
            <person name="Leongamornlert D.A."/>
            <person name="Leversha M."/>
            <person name="Lloyd C.R."/>
            <person name="Lloyd D.M."/>
            <person name="Loveland J.E."/>
            <person name="Lovell J."/>
            <person name="Martin S."/>
            <person name="Mashreghi-Mohammadi M."/>
            <person name="Maslen G.L."/>
            <person name="Matthews L."/>
            <person name="McCann O.T."/>
            <person name="McLaren S.J."/>
            <person name="McLay K."/>
            <person name="McMurray A."/>
            <person name="Moore M.J.F."/>
            <person name="Mullikin J.C."/>
            <person name="Niblett D."/>
            <person name="Nickerson T."/>
            <person name="Novik K.L."/>
            <person name="Oliver K."/>
            <person name="Overton-Larty E.K."/>
            <person name="Parker A."/>
            <person name="Patel R."/>
            <person name="Pearce A.V."/>
            <person name="Peck A.I."/>
            <person name="Phillimore B.J.C.T."/>
            <person name="Phillips S."/>
            <person name="Plumb R.W."/>
            <person name="Porter K.M."/>
            <person name="Ramsey Y."/>
            <person name="Ranby S.A."/>
            <person name="Rice C.M."/>
            <person name="Ross M.T."/>
            <person name="Searle S.M."/>
            <person name="Sehra H.K."/>
            <person name="Sheridan E."/>
            <person name="Skuce C.D."/>
            <person name="Smith S."/>
            <person name="Smith M."/>
            <person name="Spraggon L."/>
            <person name="Squares S.L."/>
            <person name="Steward C.A."/>
            <person name="Sycamore N."/>
            <person name="Tamlyn-Hall G."/>
            <person name="Tester J."/>
            <person name="Theaker A.J."/>
            <person name="Thomas D.W."/>
            <person name="Thorpe A."/>
            <person name="Tracey A."/>
            <person name="Tromans A."/>
            <person name="Tubby B."/>
            <person name="Wall M."/>
            <person name="Wallis J.M."/>
            <person name="West A.P."/>
            <person name="White S.S."/>
            <person name="Whitehead S.L."/>
            <person name="Whittaker H."/>
            <person name="Wild A."/>
            <person name="Willey D.J."/>
            <person name="Wilmer T.E."/>
            <person name="Wood J.M."/>
            <person name="Wray P.W."/>
            <person name="Wyatt J.C."/>
            <person name="Young L."/>
            <person name="Younger R.M."/>
            <person name="Bentley D.R."/>
            <person name="Coulson A."/>
            <person name="Durbin R.M."/>
            <person name="Hubbard T."/>
            <person name="Sulston J.E."/>
            <person name="Dunham I."/>
            <person name="Rogers J."/>
            <person name="Beck S."/>
        </authorList>
    </citation>
    <scope>NUCLEOTIDE SEQUENCE [LARGE SCALE GENOMIC DNA]</scope>
</reference>
<reference key="2">
    <citation type="journal article" date="2004" name="Genome Res.">
        <title>The status, quality, and expansion of the NIH full-length cDNA project: the Mammalian Gene Collection (MGC).</title>
        <authorList>
            <consortium name="The MGC Project Team"/>
        </authorList>
    </citation>
    <scope>NUCLEOTIDE SEQUENCE [LARGE SCALE MRNA]</scope>
    <source>
        <tissue>Uterus</tissue>
    </source>
</reference>
<reference key="3">
    <citation type="submission" date="2000-03" db="EMBL/GenBank/DDBJ databases">
        <title>A new gene associated nasopharyngeal carcinoma.</title>
        <authorList>
            <person name="Li Z.-H."/>
            <person name="Li G.-Y."/>
        </authorList>
    </citation>
    <scope>NUCLEOTIDE SEQUENCE [MRNA] OF 333-745</scope>
    <scope>VARIANTS MET-375 AND GLN-583</scope>
    <source>
        <tissue>Nasopharyngeal epithelium</tissue>
    </source>
</reference>
<reference key="4">
    <citation type="journal article" date="2008" name="Proc. Natl. Acad. Sci. U.S.A.">
        <title>A quantitative atlas of mitotic phosphorylation.</title>
        <authorList>
            <person name="Dephoure N."/>
            <person name="Zhou C."/>
            <person name="Villen J."/>
            <person name="Beausoleil S.A."/>
            <person name="Bakalarski C.E."/>
            <person name="Elledge S.J."/>
            <person name="Gygi S.P."/>
        </authorList>
    </citation>
    <scope>IDENTIFICATION BY MASS SPECTROMETRY [LARGE SCALE ANALYSIS]</scope>
    <source>
        <tissue>Cervix carcinoma</tissue>
    </source>
</reference>
<reference key="5">
    <citation type="journal article" date="2011" name="BMC Syst. Biol.">
        <title>Initial characterization of the human central proteome.</title>
        <authorList>
            <person name="Burkard T.R."/>
            <person name="Planyavsky M."/>
            <person name="Kaupe I."/>
            <person name="Breitwieser F.P."/>
            <person name="Buerckstuemmer T."/>
            <person name="Bennett K.L."/>
            <person name="Superti-Furga G."/>
            <person name="Colinge J."/>
        </authorList>
    </citation>
    <scope>IDENTIFICATION BY MASS SPECTROMETRY [LARGE SCALE ANALYSIS]</scope>
</reference>
<reference key="6">
    <citation type="journal article" date="2013" name="J. Proteome Res.">
        <title>Toward a comprehensive characterization of a human cancer cell phosphoproteome.</title>
        <authorList>
            <person name="Zhou H."/>
            <person name="Di Palma S."/>
            <person name="Preisinger C."/>
            <person name="Peng M."/>
            <person name="Polat A.N."/>
            <person name="Heck A.J."/>
            <person name="Mohammed S."/>
        </authorList>
    </citation>
    <scope>IDENTIFICATION BY MASS SPECTROMETRY [LARGE SCALE ANALYSIS]</scope>
    <source>
        <tissue>Erythroleukemia</tissue>
    </source>
</reference>
<reference key="7">
    <citation type="submission" date="2007-10" db="PDB data bank">
        <title>Solution structure of the zinc finger domains (1-87) from human F-box only protein.</title>
        <authorList>
            <consortium name="RIKEN structural genomics initiative (RSGI)"/>
        </authorList>
    </citation>
    <scope>STRUCTURE BY NMR OF 1-87</scope>
</reference>
<reference key="8">
    <citation type="journal article" date="2006" name="Science">
        <title>The consensus coding sequences of human breast and colorectal cancers.</title>
        <authorList>
            <person name="Sjoeblom T."/>
            <person name="Jones S."/>
            <person name="Wood L.D."/>
            <person name="Parsons D.W."/>
            <person name="Lin J."/>
            <person name="Barber T.D."/>
            <person name="Mandelker D."/>
            <person name="Leary R.J."/>
            <person name="Ptak J."/>
            <person name="Silliman N."/>
            <person name="Szabo S."/>
            <person name="Buckhaults P."/>
            <person name="Farrell C."/>
            <person name="Meeh P."/>
            <person name="Markowitz S.D."/>
            <person name="Willis J."/>
            <person name="Dawson D."/>
            <person name="Willson J.K.V."/>
            <person name="Gazdar A.F."/>
            <person name="Hartigan J."/>
            <person name="Wu L."/>
            <person name="Liu C."/>
            <person name="Parmigiani G."/>
            <person name="Park B.H."/>
            <person name="Bachman K.E."/>
            <person name="Papadopoulos N."/>
            <person name="Vogelstein B."/>
            <person name="Kinzler K.W."/>
            <person name="Velculescu V.E."/>
        </authorList>
    </citation>
    <scope>VARIANT [LARGE SCALE ANALYSIS] CYS-8</scope>
</reference>
<name>FBX30_HUMAN</name>
<organism>
    <name type="scientific">Homo sapiens</name>
    <name type="common">Human</name>
    <dbReference type="NCBI Taxonomy" id="9606"/>
    <lineage>
        <taxon>Eukaryota</taxon>
        <taxon>Metazoa</taxon>
        <taxon>Chordata</taxon>
        <taxon>Craniata</taxon>
        <taxon>Vertebrata</taxon>
        <taxon>Euteleostomi</taxon>
        <taxon>Mammalia</taxon>
        <taxon>Eutheria</taxon>
        <taxon>Euarchontoglires</taxon>
        <taxon>Primates</taxon>
        <taxon>Haplorrhini</taxon>
        <taxon>Catarrhini</taxon>
        <taxon>Hominidae</taxon>
        <taxon>Homo</taxon>
    </lineage>
</organism>
<keyword id="KW-0002">3D-structure</keyword>
<keyword id="KW-0479">Metal-binding</keyword>
<keyword id="KW-1267">Proteomics identification</keyword>
<keyword id="KW-1185">Reference proteome</keyword>
<keyword id="KW-0832">Ubl conjugation</keyword>
<keyword id="KW-0833">Ubl conjugation pathway</keyword>
<keyword id="KW-0862">Zinc</keyword>
<keyword id="KW-0863">Zinc-finger</keyword>
<proteinExistence type="evidence at protein level"/>
<accession>Q8TB52</accession>
<accession>Q9BXZ7</accession>
<sequence>MEEELQHSHCVNCVSRRCMTRPEPGISCDLIGCPLVCGAVFHSCKADEHRLLCPFERVPCLNSDFGCPFTMARNKVAEHLEMCPASVVCCTMEWNRWPVSYADRKSYENLSRDVDEVAQLDMALALQDQRMLLESLKVATMMSKATDKVSKPREQISVKSSVPEIPHANGLVSVDEESYGALYQATVETTRSLAAALDILNTATRDIGMLNTSVPNDMDEQQNARESLEDQNLKDQDHLYEEEIGAVGGIDYNDTNQNAQSEQNGSSDLLCDLNTSSYDTSALCNGFPLENICTQVIDQNQNLHGDSKQSNLTNGDCVASSDGTSKPSSSLAVAAQLREIIPSSALPNGTVQHILMPDDEGEGELCWKKVDLGDVKNVDVLSFSHAPSFNFLSNSCWSKPKEDKAVDTSDLEVAEDPMGLQGIDLITAALLFCLGDSPGGRGISDSRMADIYHIDVGTQTFSLPSAILATSTMVGEIASASACDHANPQLSNPSPFQTLGLDLVLECVARYQPKQRSMFTFVCGQLFRRKEFSSHFKNVHGDIHAGLNGWMEQRCPLAYYGCTYSQRRFCPSIQGAKIIHDRHLRSFGVQPCVSTVLVEPARNCVLGLHNDHLSSLPFEVLQHIAGFLDGFSLCQLSCVSKLMRDVCGSLLQSRGMVILQWGKRKYPEGNSSWQIKEKVWRFSTAFCSVNEWKFADILSMADHLKKCSYNVVEKREEAIPLPCMCVTRELTKEGRSLRSVLKPVL</sequence>
<feature type="chain" id="PRO_0000119918" description="F-box only protein 30">
    <location>
        <begin position="1"/>
        <end position="745"/>
    </location>
</feature>
<feature type="domain" description="F-box" evidence="2">
    <location>
        <begin position="610"/>
        <end position="658"/>
    </location>
</feature>
<feature type="zinc finger region" description="TRAF-type" evidence="3">
    <location>
        <begin position="48"/>
        <end position="109"/>
    </location>
</feature>
<feature type="region of interest" description="Disordered" evidence="4">
    <location>
        <begin position="211"/>
        <end position="231"/>
    </location>
</feature>
<feature type="region of interest" description="Disordered" evidence="4">
    <location>
        <begin position="305"/>
        <end position="324"/>
    </location>
</feature>
<feature type="compositionally biased region" description="Basic and acidic residues" evidence="4">
    <location>
        <begin position="222"/>
        <end position="231"/>
    </location>
</feature>
<feature type="compositionally biased region" description="Polar residues" evidence="4">
    <location>
        <begin position="305"/>
        <end position="314"/>
    </location>
</feature>
<feature type="sequence variant" id="VAR_036072" description="In a colorectal cancer sample; somatic mutation." evidence="5">
    <original>S</original>
    <variation>C</variation>
    <location>
        <position position="8"/>
    </location>
</feature>
<feature type="sequence variant" id="VAR_024443" description="In dbSNP:rs9373475." evidence="6">
    <original>V</original>
    <variation>M</variation>
    <location>
        <position position="375"/>
    </location>
</feature>
<feature type="sequence variant" id="VAR_049044" description="In dbSNP:rs17075385.">
    <original>S</original>
    <variation>C</variation>
    <location>
        <position position="382"/>
    </location>
</feature>
<feature type="sequence variant" id="VAR_020410" description="In dbSNP:rs3811102." evidence="6">
    <original>H</original>
    <variation>Q</variation>
    <location>
        <position position="583"/>
    </location>
</feature>
<feature type="helix" evidence="8">
    <location>
        <begin position="10"/>
        <end position="12"/>
    </location>
</feature>
<feature type="turn" evidence="8">
    <location>
        <begin position="24"/>
        <end position="26"/>
    </location>
</feature>
<feature type="strand" evidence="8">
    <location>
        <begin position="30"/>
        <end position="32"/>
    </location>
</feature>
<feature type="strand" evidence="8">
    <location>
        <begin position="40"/>
        <end position="42"/>
    </location>
</feature>
<feature type="helix" evidence="8">
    <location>
        <begin position="43"/>
        <end position="52"/>
    </location>
</feature>
<feature type="strand" evidence="8">
    <location>
        <begin position="54"/>
        <end position="59"/>
    </location>
</feature>
<feature type="turn" evidence="8">
    <location>
        <begin position="61"/>
        <end position="65"/>
    </location>
</feature>
<feature type="strand" evidence="8">
    <location>
        <begin position="70"/>
        <end position="74"/>
    </location>
</feature>
<feature type="helix" evidence="8">
    <location>
        <begin position="76"/>
        <end position="81"/>
    </location>
</feature>
<feature type="helix" evidence="8">
    <location>
        <begin position="84"/>
        <end position="86"/>
    </location>
</feature>